<comment type="function">
    <text evidence="1">Catalyzes the deamination of various vicinal amino-alcohols to oxo compounds. Allows this organism to utilize ethanolamine as the sole source of nitrogen and carbon in the presence of external vitamin B12.</text>
</comment>
<comment type="catalytic activity">
    <reaction evidence="1">
        <text>ethanolamine = acetaldehyde + NH4(+)</text>
        <dbReference type="Rhea" id="RHEA:15313"/>
        <dbReference type="ChEBI" id="CHEBI:15343"/>
        <dbReference type="ChEBI" id="CHEBI:28938"/>
        <dbReference type="ChEBI" id="CHEBI:57603"/>
        <dbReference type="EC" id="4.3.1.7"/>
    </reaction>
</comment>
<comment type="cofactor">
    <cofactor evidence="1">
        <name>adenosylcob(III)alamin</name>
        <dbReference type="ChEBI" id="CHEBI:18408"/>
    </cofactor>
    <text evidence="1">Binds between the large and small subunits.</text>
</comment>
<comment type="pathway">
    <text evidence="1">Amine and polyamine degradation; ethanolamine degradation.</text>
</comment>
<comment type="subunit">
    <text evidence="1">The basic unit is a heterodimer which dimerizes to form tetramers. The heterotetramers trimerize; 6 large subunits form a core ring with 6 small subunits projecting outwards.</text>
</comment>
<comment type="subcellular location">
    <subcellularLocation>
        <location evidence="1">Bacterial microcompartment</location>
    </subcellularLocation>
</comment>
<comment type="similarity">
    <text evidence="1">Belongs to the EutC family.</text>
</comment>
<accession>C4ZX13</accession>
<gene>
    <name evidence="1" type="primary">eutC</name>
    <name type="ordered locus">BWG_2202</name>
</gene>
<reference key="1">
    <citation type="journal article" date="2009" name="J. Bacteriol.">
        <title>Genomic sequencing reveals regulatory mutations and recombinational events in the widely used MC4100 lineage of Escherichia coli K-12.</title>
        <authorList>
            <person name="Ferenci T."/>
            <person name="Zhou Z."/>
            <person name="Betteridge T."/>
            <person name="Ren Y."/>
            <person name="Liu Y."/>
            <person name="Feng L."/>
            <person name="Reeves P.R."/>
            <person name="Wang L."/>
        </authorList>
    </citation>
    <scope>NUCLEOTIDE SEQUENCE [LARGE SCALE GENOMIC DNA]</scope>
    <source>
        <strain>K12 / MC4100 / BW2952</strain>
    </source>
</reference>
<keyword id="KW-1283">Bacterial microcompartment</keyword>
<keyword id="KW-0846">Cobalamin</keyword>
<keyword id="KW-0170">Cobalt</keyword>
<keyword id="KW-0456">Lyase</keyword>
<feature type="chain" id="PRO_1000212214" description="Ethanolamine ammonia-lyase small subunit">
    <location>
        <begin position="1"/>
        <end position="295"/>
    </location>
</feature>
<feature type="binding site" evidence="1">
    <location>
        <position position="207"/>
    </location>
    <ligand>
        <name>adenosylcob(III)alamin</name>
        <dbReference type="ChEBI" id="CHEBI:18408"/>
    </ligand>
</feature>
<feature type="binding site" evidence="1">
    <location>
        <position position="228"/>
    </location>
    <ligand>
        <name>adenosylcob(III)alamin</name>
        <dbReference type="ChEBI" id="CHEBI:18408"/>
    </ligand>
</feature>
<feature type="binding site" evidence="1">
    <location>
        <position position="258"/>
    </location>
    <ligand>
        <name>adenosylcob(III)alamin</name>
        <dbReference type="ChEBI" id="CHEBI:18408"/>
    </ligand>
</feature>
<organism>
    <name type="scientific">Escherichia coli (strain K12 / MC4100 / BW2952)</name>
    <dbReference type="NCBI Taxonomy" id="595496"/>
    <lineage>
        <taxon>Bacteria</taxon>
        <taxon>Pseudomonadati</taxon>
        <taxon>Pseudomonadota</taxon>
        <taxon>Gammaproteobacteria</taxon>
        <taxon>Enterobacterales</taxon>
        <taxon>Enterobacteriaceae</taxon>
        <taxon>Escherichia</taxon>
    </lineage>
</organism>
<dbReference type="EC" id="4.3.1.7" evidence="1"/>
<dbReference type="EMBL" id="CP001396">
    <property type="protein sequence ID" value="ACR63044.1"/>
    <property type="molecule type" value="Genomic_DNA"/>
</dbReference>
<dbReference type="RefSeq" id="WP_000372316.1">
    <property type="nucleotide sequence ID" value="NC_012759.1"/>
</dbReference>
<dbReference type="SMR" id="C4ZX13"/>
<dbReference type="KEGG" id="ebw:BWG_2202"/>
<dbReference type="HOGENOM" id="CLU_068224_0_0_6"/>
<dbReference type="UniPathway" id="UPA00560"/>
<dbReference type="GO" id="GO:0009350">
    <property type="term" value="C:ethanolamine ammonia-lyase complex"/>
    <property type="evidence" value="ECO:0007669"/>
    <property type="project" value="UniProtKB-UniRule"/>
</dbReference>
<dbReference type="GO" id="GO:0031471">
    <property type="term" value="C:ethanolamine degradation polyhedral organelle"/>
    <property type="evidence" value="ECO:0007669"/>
    <property type="project" value="UniProtKB-UniRule"/>
</dbReference>
<dbReference type="GO" id="GO:0031419">
    <property type="term" value="F:cobalamin binding"/>
    <property type="evidence" value="ECO:0007669"/>
    <property type="project" value="UniProtKB-UniRule"/>
</dbReference>
<dbReference type="GO" id="GO:0008851">
    <property type="term" value="F:ethanolamine ammonia-lyase activity"/>
    <property type="evidence" value="ECO:0007669"/>
    <property type="project" value="UniProtKB-UniRule"/>
</dbReference>
<dbReference type="GO" id="GO:0006520">
    <property type="term" value="P:amino acid metabolic process"/>
    <property type="evidence" value="ECO:0007669"/>
    <property type="project" value="InterPro"/>
</dbReference>
<dbReference type="GO" id="GO:0046336">
    <property type="term" value="P:ethanolamine catabolic process"/>
    <property type="evidence" value="ECO:0007669"/>
    <property type="project" value="UniProtKB-UniRule"/>
</dbReference>
<dbReference type="FunFam" id="3.40.50.11240:FF:000001">
    <property type="entry name" value="Ethanolamine ammonia-lyase light chain"/>
    <property type="match status" value="1"/>
</dbReference>
<dbReference type="Gene3D" id="6.10.140.690">
    <property type="match status" value="1"/>
</dbReference>
<dbReference type="Gene3D" id="6.10.250.2060">
    <property type="match status" value="1"/>
</dbReference>
<dbReference type="Gene3D" id="3.40.50.11240">
    <property type="entry name" value="Ethanolamine ammonia-lyase light chain (EutC)"/>
    <property type="match status" value="1"/>
</dbReference>
<dbReference type="HAMAP" id="MF_00601">
    <property type="entry name" value="EutC"/>
    <property type="match status" value="1"/>
</dbReference>
<dbReference type="InterPro" id="IPR009246">
    <property type="entry name" value="EutC"/>
</dbReference>
<dbReference type="InterPro" id="IPR042251">
    <property type="entry name" value="EutC_C"/>
</dbReference>
<dbReference type="NCBIfam" id="NF003971">
    <property type="entry name" value="PRK05465.1"/>
    <property type="match status" value="1"/>
</dbReference>
<dbReference type="PANTHER" id="PTHR39330">
    <property type="entry name" value="ETHANOLAMINE AMMONIA-LYASE LIGHT CHAIN"/>
    <property type="match status" value="1"/>
</dbReference>
<dbReference type="PANTHER" id="PTHR39330:SF1">
    <property type="entry name" value="ETHANOLAMINE AMMONIA-LYASE SMALL SUBUNIT"/>
    <property type="match status" value="1"/>
</dbReference>
<dbReference type="Pfam" id="PF05985">
    <property type="entry name" value="EutC"/>
    <property type="match status" value="1"/>
</dbReference>
<dbReference type="PIRSF" id="PIRSF018982">
    <property type="entry name" value="EutC"/>
    <property type="match status" value="1"/>
</dbReference>
<proteinExistence type="inferred from homology"/>
<protein>
    <recommendedName>
        <fullName evidence="1">Ethanolamine ammonia-lyase small subunit</fullName>
        <shortName evidence="1">EAL small subunit</shortName>
        <ecNumber evidence="1">4.3.1.7</ecNumber>
    </recommendedName>
</protein>
<evidence type="ECO:0000255" key="1">
    <source>
        <dbReference type="HAMAP-Rule" id="MF_00601"/>
    </source>
</evidence>
<name>EUTC_ECOBW</name>
<sequence length="295" mass="31782">MDQKQIEEIVRSVMASMGQAAPAPSEAKCATTNCAAPVTSESCALDLGSAEAKAWIGVENPHRADVLTELRRSTVARVCTGRAGPRPRTQALLRFLADHSRSKDTVLKEVPEEWVKAQGLLEVRSEISDKNLYLTRPDMGRRLCAEAVEALKAQCVANPDVQVVISDGLSTDAITVNYEEILPPLMAGLKQAGLKVGTPFFVRYGRVKIEDQIGEILGAKVVILLVGERPGLGQSESLSCYAVYSPRMATTVEADRTCISNIHQGGTPPVEAAAVIVDLAKRMLEQKASGINMTR</sequence>